<sequence>MFQDNPLLAQLKQQLHSQTPRAEGVVKATEKGFGFLEVDAQKSYFIPPPQMKKVMHGDRIIAVIHSEKERESAEPEELVEPFLTRFVGKVQGKNDRLTIVPDHPLLKDAIPCRAARGLNHEFKEGDWAVAEMRRHPLKGDRSFYAELTQYITFGDDHFVPWWVTLARHNLEKEAPDGVATEMLDEGLVREDLTSLDFVTIDSASTEDMDDALFAKALPDDKLQLIVAIADPTAWIAEGSKLDKAAKIRAFTNYLPGFNIPMLPRELSDDLCSLRANEVRPVLACRMTLSADGTIEDNIEFFAATIESKAKLVYDQVSDWLENTGDWKPESEAIAEQVRLLAQICQRRGEWRHNHALVFKDRPDYRFILGEKGEVLDIVAEPRRIANRIVEEAMIAANICAARVLRDKLGFGIYNVHMGFDPANADALAALLKTHGLHVDAEEVLTLDGFCKLRRELDAQPTGFLDSRIRRFQSFAEISTEPGPHFGLGLEAYATWTSPIRKYGDMINHRLLKAVIKGETATRPQDEITVQMAERRRLNRMAERDVGDWLYARFLKDKAGTGTRFAAEIVDISRGGMRVRLVDNGAIAFIPAPFLHAVRDELVCSQENGTVQIKGETVYKVTDVIDVTIAEVRMETRSIIARPVA</sequence>
<name>RNB_SHIF8</name>
<keyword id="KW-0963">Cytoplasm</keyword>
<keyword id="KW-0269">Exonuclease</keyword>
<keyword id="KW-0378">Hydrolase</keyword>
<keyword id="KW-0540">Nuclease</keyword>
<keyword id="KW-0694">RNA-binding</keyword>
<accession>Q0T5B1</accession>
<organism>
    <name type="scientific">Shigella flexneri serotype 5b (strain 8401)</name>
    <dbReference type="NCBI Taxonomy" id="373384"/>
    <lineage>
        <taxon>Bacteria</taxon>
        <taxon>Pseudomonadati</taxon>
        <taxon>Pseudomonadota</taxon>
        <taxon>Gammaproteobacteria</taxon>
        <taxon>Enterobacterales</taxon>
        <taxon>Enterobacteriaceae</taxon>
        <taxon>Shigella</taxon>
    </lineage>
</organism>
<protein>
    <recommendedName>
        <fullName evidence="2">Exoribonuclease 2</fullName>
        <ecNumber evidence="2">3.1.13.1</ecNumber>
    </recommendedName>
    <alternativeName>
        <fullName evidence="2">Exoribonuclease II</fullName>
        <shortName evidence="2">RNase II</shortName>
        <shortName evidence="2">Ribonuclease II</shortName>
    </alternativeName>
</protein>
<proteinExistence type="inferred from homology"/>
<gene>
    <name evidence="2" type="primary">rnb</name>
    <name type="ordered locus">SFV_1300</name>
</gene>
<feature type="chain" id="PRO_1000063900" description="Exoribonuclease 2">
    <location>
        <begin position="1"/>
        <end position="644"/>
    </location>
</feature>
<feature type="domain" description="RNB" evidence="1">
    <location>
        <begin position="189"/>
        <end position="516"/>
    </location>
</feature>
<feature type="domain" description="S1 motif" evidence="2">
    <location>
        <begin position="561"/>
        <end position="643"/>
    </location>
</feature>
<reference key="1">
    <citation type="journal article" date="2006" name="BMC Genomics">
        <title>Complete genome sequence of Shigella flexneri 5b and comparison with Shigella flexneri 2a.</title>
        <authorList>
            <person name="Nie H."/>
            <person name="Yang F."/>
            <person name="Zhang X."/>
            <person name="Yang J."/>
            <person name="Chen L."/>
            <person name="Wang J."/>
            <person name="Xiong Z."/>
            <person name="Peng J."/>
            <person name="Sun L."/>
            <person name="Dong J."/>
            <person name="Xue Y."/>
            <person name="Xu X."/>
            <person name="Chen S."/>
            <person name="Yao Z."/>
            <person name="Shen Y."/>
            <person name="Jin Q."/>
        </authorList>
    </citation>
    <scope>NUCLEOTIDE SEQUENCE [LARGE SCALE GENOMIC DNA]</scope>
    <source>
        <strain>8401</strain>
    </source>
</reference>
<evidence type="ECO:0000255" key="1"/>
<evidence type="ECO:0000255" key="2">
    <source>
        <dbReference type="HAMAP-Rule" id="MF_01036"/>
    </source>
</evidence>
<dbReference type="EC" id="3.1.13.1" evidence="2"/>
<dbReference type="EMBL" id="CP000266">
    <property type="protein sequence ID" value="ABF03504.1"/>
    <property type="molecule type" value="Genomic_DNA"/>
</dbReference>
<dbReference type="RefSeq" id="WP_000485029.1">
    <property type="nucleotide sequence ID" value="NC_008258.1"/>
</dbReference>
<dbReference type="SMR" id="Q0T5B1"/>
<dbReference type="KEGG" id="sfv:SFV_1300"/>
<dbReference type="HOGENOM" id="CLU_002333_7_3_6"/>
<dbReference type="Proteomes" id="UP000000659">
    <property type="component" value="Chromosome"/>
</dbReference>
<dbReference type="GO" id="GO:0005829">
    <property type="term" value="C:cytosol"/>
    <property type="evidence" value="ECO:0007669"/>
    <property type="project" value="UniProtKB-ARBA"/>
</dbReference>
<dbReference type="GO" id="GO:0008859">
    <property type="term" value="F:exoribonuclease II activity"/>
    <property type="evidence" value="ECO:0007669"/>
    <property type="project" value="UniProtKB-UniRule"/>
</dbReference>
<dbReference type="GO" id="GO:0003723">
    <property type="term" value="F:RNA binding"/>
    <property type="evidence" value="ECO:0007669"/>
    <property type="project" value="UniProtKB-KW"/>
</dbReference>
<dbReference type="GO" id="GO:0006402">
    <property type="term" value="P:mRNA catabolic process"/>
    <property type="evidence" value="ECO:0007669"/>
    <property type="project" value="UniProtKB-UniRule"/>
</dbReference>
<dbReference type="FunFam" id="2.40.50.140:FF:000079">
    <property type="entry name" value="Exoribonuclease 2"/>
    <property type="match status" value="1"/>
</dbReference>
<dbReference type="FunFam" id="2.40.50.140:FF:000081">
    <property type="entry name" value="Exoribonuclease 2"/>
    <property type="match status" value="1"/>
</dbReference>
<dbReference type="FunFam" id="2.40.50.640:FF:000001">
    <property type="entry name" value="Exoribonuclease 2"/>
    <property type="match status" value="1"/>
</dbReference>
<dbReference type="Gene3D" id="2.40.50.640">
    <property type="match status" value="1"/>
</dbReference>
<dbReference type="Gene3D" id="2.40.50.140">
    <property type="entry name" value="Nucleic acid-binding proteins"/>
    <property type="match status" value="2"/>
</dbReference>
<dbReference type="HAMAP" id="MF_01036">
    <property type="entry name" value="RNase_II"/>
    <property type="match status" value="1"/>
</dbReference>
<dbReference type="InterPro" id="IPR011129">
    <property type="entry name" value="CSD"/>
</dbReference>
<dbReference type="InterPro" id="IPR012340">
    <property type="entry name" value="NA-bd_OB-fold"/>
</dbReference>
<dbReference type="InterPro" id="IPR013223">
    <property type="entry name" value="RNase_B_OB_dom"/>
</dbReference>
<dbReference type="InterPro" id="IPR011804">
    <property type="entry name" value="RNase_II"/>
</dbReference>
<dbReference type="InterPro" id="IPR001900">
    <property type="entry name" value="RNase_II/R"/>
</dbReference>
<dbReference type="InterPro" id="IPR022966">
    <property type="entry name" value="RNase_II/R_CS"/>
</dbReference>
<dbReference type="InterPro" id="IPR004476">
    <property type="entry name" value="RNase_II/RNase_R"/>
</dbReference>
<dbReference type="InterPro" id="IPR050180">
    <property type="entry name" value="RNR_Ribonuclease"/>
</dbReference>
<dbReference type="InterPro" id="IPR003029">
    <property type="entry name" value="S1_domain"/>
</dbReference>
<dbReference type="NCBIfam" id="TIGR00358">
    <property type="entry name" value="3_prime_RNase"/>
    <property type="match status" value="1"/>
</dbReference>
<dbReference type="NCBIfam" id="NF003455">
    <property type="entry name" value="PRK05054.1"/>
    <property type="match status" value="1"/>
</dbReference>
<dbReference type="NCBIfam" id="TIGR02062">
    <property type="entry name" value="RNase_B"/>
    <property type="match status" value="1"/>
</dbReference>
<dbReference type="PANTHER" id="PTHR23355:SF37">
    <property type="entry name" value="EXORIBONUCLEASE 2"/>
    <property type="match status" value="1"/>
</dbReference>
<dbReference type="PANTHER" id="PTHR23355">
    <property type="entry name" value="RIBONUCLEASE"/>
    <property type="match status" value="1"/>
</dbReference>
<dbReference type="Pfam" id="PF08206">
    <property type="entry name" value="OB_RNB"/>
    <property type="match status" value="1"/>
</dbReference>
<dbReference type="Pfam" id="PF00773">
    <property type="entry name" value="RNB"/>
    <property type="match status" value="1"/>
</dbReference>
<dbReference type="Pfam" id="PF00575">
    <property type="entry name" value="S1"/>
    <property type="match status" value="1"/>
</dbReference>
<dbReference type="SMART" id="SM00357">
    <property type="entry name" value="CSP"/>
    <property type="match status" value="1"/>
</dbReference>
<dbReference type="SMART" id="SM00955">
    <property type="entry name" value="RNB"/>
    <property type="match status" value="1"/>
</dbReference>
<dbReference type="SMART" id="SM00316">
    <property type="entry name" value="S1"/>
    <property type="match status" value="1"/>
</dbReference>
<dbReference type="SUPFAM" id="SSF50249">
    <property type="entry name" value="Nucleic acid-binding proteins"/>
    <property type="match status" value="4"/>
</dbReference>
<dbReference type="PROSITE" id="PS01175">
    <property type="entry name" value="RIBONUCLEASE_II"/>
    <property type="match status" value="1"/>
</dbReference>
<comment type="function">
    <text evidence="2">Involved in mRNA degradation. Hydrolyzes single-stranded polyribonucleotides processively in the 3' to 5' direction.</text>
</comment>
<comment type="catalytic activity">
    <reaction evidence="2">
        <text>Exonucleolytic cleavage in the 3'- to 5'-direction to yield nucleoside 5'-phosphates.</text>
        <dbReference type="EC" id="3.1.13.1"/>
    </reaction>
</comment>
<comment type="subcellular location">
    <subcellularLocation>
        <location evidence="2">Cytoplasm</location>
    </subcellularLocation>
</comment>
<comment type="similarity">
    <text evidence="2">Belongs to the RNR ribonuclease family. RNase II subfamily.</text>
</comment>